<reference key="1">
    <citation type="journal article" date="1997" name="Nature">
        <title>Aggressiveness, hypoalgesia and high blood pressure in mice lacking the adenosine A2a receptor.</title>
        <authorList>
            <person name="Ledent C."/>
            <person name="Vaugeois J.M."/>
            <person name="Schiffmann S.N."/>
            <person name="Pedrazzini T."/>
            <person name="El-Yacoubi M."/>
            <person name="Vanderhaeghen J.J."/>
            <person name="Costentin J."/>
            <person name="Heath J.K."/>
            <person name="Vassart G."/>
            <person name="Parmentier M."/>
        </authorList>
    </citation>
    <scope>NUCLEOTIDE SEQUENCE [GENOMIC DNA / MRNA]</scope>
    <source>
        <strain>129/Sv</strain>
    </source>
</reference>
<reference key="2">
    <citation type="submission" date="2005-09" db="EMBL/GenBank/DDBJ databases">
        <authorList>
            <person name="Mural R.J."/>
            <person name="Adams M.D."/>
            <person name="Myers E.W."/>
            <person name="Smith H.O."/>
            <person name="Venter J.C."/>
        </authorList>
    </citation>
    <scope>NUCLEOTIDE SEQUENCE [LARGE SCALE GENOMIC DNA]</scope>
</reference>
<reference key="3">
    <citation type="journal article" date="2004" name="Genome Res.">
        <title>The status, quality, and expansion of the NIH full-length cDNA project: the Mammalian Gene Collection (MGC).</title>
        <authorList>
            <consortium name="The MGC Project Team"/>
        </authorList>
    </citation>
    <scope>NUCLEOTIDE SEQUENCE [LARGE SCALE MRNA]</scope>
    <source>
        <tissue>Jaw</tissue>
    </source>
</reference>
<reference key="4">
    <citation type="journal article" date="1994" name="J. Immunol.">
        <title>Cloning of two adenosine receptor subtypes from mouse bone marrow-derived mast cells.</title>
        <authorList>
            <person name="Marquardt D.L."/>
            <person name="Walker L.L."/>
            <person name="Heinemann S."/>
        </authorList>
    </citation>
    <scope>NUCLEOTIDE SEQUENCE [MRNA] OF 53-213</scope>
    <source>
        <strain>BALB/cJ</strain>
        <tissue>Bone marrow</tissue>
    </source>
</reference>
<reference key="5">
    <citation type="journal article" date="2013" name="Biochim. Biophys. Acta">
        <title>A novel Galphas-binding protein, Gas-2 like 2, facilitates the signaling of the A2A adenosine receptor.</title>
        <authorList>
            <person name="Wu Y.C."/>
            <person name="Lai H.L."/>
            <person name="Chang W.C."/>
            <person name="Lin J.T."/>
            <person name="Liu Y.J."/>
            <person name="Chern Y."/>
        </authorList>
    </citation>
    <scope>INTERACTION WITH GAS2L2</scope>
</reference>
<name>AA2AR_MOUSE</name>
<sequence length="410" mass="44971">MGSSVYIMVELAIAVLAILGNVLVCWAVWINSNLQNVTNFFVVSLAAADIAVGVLAIPFAITISTGFCAACHGCLFFACFVLVLTQSSIFSLLAIAIDRYIAIRIPLRYNGLVTGMRAKGIIAICWVLSFAIGLTPMLGWNNCSQKDENSTKTCGEGRVTCLFEDVVPMNYMVYYNFFAFVLLPLLLMLAIYLRIFLAARRQLKQMESQPLPGERTRSTLQKEVHAAKSLAIIVGLFALCWLPLHIINCFTFFCSTCQHAPPWLMYLAIILSHSNSVVNPFIYAYRIREFRQTFRKIIRTHVLRRQEPFRAGGSSAWALAAHSTEGEQVSLRLNGHPLGVWANGSAPHSGRRPNGYTLGPGGGGSTQGSPGDVELLTQEHQEGQEHPGLGDHLAQGRVGTASWSSEFAPS</sequence>
<keyword id="KW-1003">Cell membrane</keyword>
<keyword id="KW-1015">Disulfide bond</keyword>
<keyword id="KW-0297">G-protein coupled receptor</keyword>
<keyword id="KW-0325">Glycoprotein</keyword>
<keyword id="KW-0472">Membrane</keyword>
<keyword id="KW-0675">Receptor</keyword>
<keyword id="KW-1185">Reference proteome</keyword>
<keyword id="KW-0807">Transducer</keyword>
<keyword id="KW-0812">Transmembrane</keyword>
<keyword id="KW-1133">Transmembrane helix</keyword>
<keyword id="KW-0832">Ubl conjugation</keyword>
<organism>
    <name type="scientific">Mus musculus</name>
    <name type="common">Mouse</name>
    <dbReference type="NCBI Taxonomy" id="10090"/>
    <lineage>
        <taxon>Eukaryota</taxon>
        <taxon>Metazoa</taxon>
        <taxon>Chordata</taxon>
        <taxon>Craniata</taxon>
        <taxon>Vertebrata</taxon>
        <taxon>Euteleostomi</taxon>
        <taxon>Mammalia</taxon>
        <taxon>Eutheria</taxon>
        <taxon>Euarchontoglires</taxon>
        <taxon>Glires</taxon>
        <taxon>Rodentia</taxon>
        <taxon>Myomorpha</taxon>
        <taxon>Muroidea</taxon>
        <taxon>Muridae</taxon>
        <taxon>Murinae</taxon>
        <taxon>Mus</taxon>
        <taxon>Mus</taxon>
    </lineage>
</organism>
<evidence type="ECO:0000250" key="1"/>
<evidence type="ECO:0000250" key="2">
    <source>
        <dbReference type="UniProtKB" id="P11617"/>
    </source>
</evidence>
<evidence type="ECO:0000250" key="3">
    <source>
        <dbReference type="UniProtKB" id="P29274"/>
    </source>
</evidence>
<evidence type="ECO:0000250" key="4">
    <source>
        <dbReference type="UniProtKB" id="P30543"/>
    </source>
</evidence>
<evidence type="ECO:0000255" key="5"/>
<evidence type="ECO:0000255" key="6">
    <source>
        <dbReference type="PROSITE-ProRule" id="PRU00521"/>
    </source>
</evidence>
<evidence type="ECO:0000256" key="7">
    <source>
        <dbReference type="SAM" id="MobiDB-lite"/>
    </source>
</evidence>
<evidence type="ECO:0000269" key="8">
    <source>
    </source>
</evidence>
<evidence type="ECO:0000305" key="9"/>
<gene>
    <name type="primary">Adora2a</name>
</gene>
<dbReference type="EMBL" id="Y13344">
    <property type="protein sequence ID" value="CAA73787.1"/>
    <property type="molecule type" value="Genomic_DNA"/>
</dbReference>
<dbReference type="EMBL" id="Y13345">
    <property type="protein sequence ID" value="CAA73787.1"/>
    <property type="status" value="JOINED"/>
    <property type="molecule type" value="Genomic_DNA"/>
</dbReference>
<dbReference type="EMBL" id="Y13346">
    <property type="protein sequence ID" value="CAA73788.1"/>
    <property type="molecule type" value="mRNA"/>
</dbReference>
<dbReference type="EMBL" id="BC110692">
    <property type="protein sequence ID" value="AAI10693.1"/>
    <property type="molecule type" value="mRNA"/>
</dbReference>
<dbReference type="EMBL" id="CH466553">
    <property type="protein sequence ID" value="EDL31926.1"/>
    <property type="molecule type" value="Genomic_DNA"/>
</dbReference>
<dbReference type="EMBL" id="CH466553">
    <property type="protein sequence ID" value="EDL31927.1"/>
    <property type="molecule type" value="Genomic_DNA"/>
</dbReference>
<dbReference type="EMBL" id="U05672">
    <property type="protein sequence ID" value="AAA19000.1"/>
    <property type="molecule type" value="mRNA"/>
</dbReference>
<dbReference type="CCDS" id="CCDS23924.1"/>
<dbReference type="PIR" id="I48932">
    <property type="entry name" value="I48932"/>
</dbReference>
<dbReference type="RefSeq" id="NP_001318024.1">
    <property type="nucleotide sequence ID" value="NM_001331095.2"/>
</dbReference>
<dbReference type="RefSeq" id="NP_001318025.1">
    <property type="nucleotide sequence ID" value="NM_001331096.2"/>
</dbReference>
<dbReference type="RefSeq" id="NP_001415278.1">
    <property type="nucleotide sequence ID" value="NM_001428349.1"/>
</dbReference>
<dbReference type="RefSeq" id="NP_033760.2">
    <property type="nucleotide sequence ID" value="NM_009630.4"/>
</dbReference>
<dbReference type="RefSeq" id="XP_006513156.1">
    <property type="nucleotide sequence ID" value="XM_006513093.3"/>
</dbReference>
<dbReference type="SMR" id="Q60613"/>
<dbReference type="CORUM" id="Q60613"/>
<dbReference type="FunCoup" id="Q60613">
    <property type="interactions" value="913"/>
</dbReference>
<dbReference type="IntAct" id="Q60613">
    <property type="interactions" value="3"/>
</dbReference>
<dbReference type="STRING" id="10090.ENSMUSP00000101060"/>
<dbReference type="BindingDB" id="Q60613"/>
<dbReference type="ChEMBL" id="CHEMBL2115"/>
<dbReference type="GuidetoPHARMACOLOGY" id="19"/>
<dbReference type="GlyCosmos" id="Q60613">
    <property type="glycosylation" value="2 sites, No reported glycans"/>
</dbReference>
<dbReference type="GlyGen" id="Q60613">
    <property type="glycosylation" value="2 sites"/>
</dbReference>
<dbReference type="PhosphoSitePlus" id="Q60613"/>
<dbReference type="PaxDb" id="10090-ENSMUSP00000101060"/>
<dbReference type="ProteomicsDB" id="296427"/>
<dbReference type="Antibodypedia" id="9718">
    <property type="antibodies" value="443 antibodies from 41 providers"/>
</dbReference>
<dbReference type="DNASU" id="11540"/>
<dbReference type="Ensembl" id="ENSMUST00000105420.3">
    <property type="protein sequence ID" value="ENSMUSP00000101060.2"/>
    <property type="gene ID" value="ENSMUSG00000020178.7"/>
</dbReference>
<dbReference type="GeneID" id="11540"/>
<dbReference type="KEGG" id="mmu:11540"/>
<dbReference type="UCSC" id="uc007fqh.2">
    <property type="organism name" value="mouse"/>
</dbReference>
<dbReference type="AGR" id="MGI:99402"/>
<dbReference type="CTD" id="135"/>
<dbReference type="MGI" id="MGI:99402">
    <property type="gene designation" value="Adora2a"/>
</dbReference>
<dbReference type="VEuPathDB" id="HostDB:ENSMUSG00000020178"/>
<dbReference type="eggNOG" id="KOG3656">
    <property type="taxonomic scope" value="Eukaryota"/>
</dbReference>
<dbReference type="GeneTree" id="ENSGT01030000234555"/>
<dbReference type="HOGENOM" id="CLU_009579_11_5_1"/>
<dbReference type="InParanoid" id="Q60613"/>
<dbReference type="OMA" id="PPLWLMY"/>
<dbReference type="OrthoDB" id="9445642at2759"/>
<dbReference type="PhylomeDB" id="Q60613"/>
<dbReference type="TreeFam" id="TF325296"/>
<dbReference type="Reactome" id="R-MMU-417973">
    <property type="pathway name" value="Adenosine P1 receptors"/>
</dbReference>
<dbReference type="Reactome" id="R-MMU-418555">
    <property type="pathway name" value="G alpha (s) signalling events"/>
</dbReference>
<dbReference type="Reactome" id="R-MMU-5683826">
    <property type="pathway name" value="Surfactant metabolism"/>
</dbReference>
<dbReference type="BioGRID-ORCS" id="11540">
    <property type="hits" value="1 hit in 80 CRISPR screens"/>
</dbReference>
<dbReference type="PRO" id="PR:Q60613"/>
<dbReference type="Proteomes" id="UP000000589">
    <property type="component" value="Chromosome 10"/>
</dbReference>
<dbReference type="RNAct" id="Q60613">
    <property type="molecule type" value="protein"/>
</dbReference>
<dbReference type="Bgee" id="ENSMUSG00000020178">
    <property type="expression patterns" value="Expressed in caudate-putamen and 135 other cell types or tissues"/>
</dbReference>
<dbReference type="ExpressionAtlas" id="Q60613">
    <property type="expression patterns" value="baseline and differential"/>
</dbReference>
<dbReference type="GO" id="GO:0032279">
    <property type="term" value="C:asymmetric synapse"/>
    <property type="evidence" value="ECO:0007669"/>
    <property type="project" value="Ensembl"/>
</dbReference>
<dbReference type="GO" id="GO:0030673">
    <property type="term" value="C:axolemma"/>
    <property type="evidence" value="ECO:0007669"/>
    <property type="project" value="Ensembl"/>
</dbReference>
<dbReference type="GO" id="GO:0030425">
    <property type="term" value="C:dendrite"/>
    <property type="evidence" value="ECO:0007669"/>
    <property type="project" value="Ensembl"/>
</dbReference>
<dbReference type="GO" id="GO:0098978">
    <property type="term" value="C:glutamatergic synapse"/>
    <property type="evidence" value="ECO:0007669"/>
    <property type="project" value="Ensembl"/>
</dbReference>
<dbReference type="GO" id="GO:0005882">
    <property type="term" value="C:intermediate filament"/>
    <property type="evidence" value="ECO:0007669"/>
    <property type="project" value="Ensembl"/>
</dbReference>
<dbReference type="GO" id="GO:0016020">
    <property type="term" value="C:membrane"/>
    <property type="evidence" value="ECO:0000314"/>
    <property type="project" value="MGI"/>
</dbReference>
<dbReference type="GO" id="GO:0043025">
    <property type="term" value="C:neuronal cell body"/>
    <property type="evidence" value="ECO:0007669"/>
    <property type="project" value="Ensembl"/>
</dbReference>
<dbReference type="GO" id="GO:0005886">
    <property type="term" value="C:plasma membrane"/>
    <property type="evidence" value="ECO:0000314"/>
    <property type="project" value="MGI"/>
</dbReference>
<dbReference type="GO" id="GO:0045211">
    <property type="term" value="C:postsynaptic membrane"/>
    <property type="evidence" value="ECO:0007669"/>
    <property type="project" value="Ensembl"/>
</dbReference>
<dbReference type="GO" id="GO:0048786">
    <property type="term" value="C:presynaptic active zone"/>
    <property type="evidence" value="ECO:0007669"/>
    <property type="project" value="Ensembl"/>
</dbReference>
<dbReference type="GO" id="GO:0042734">
    <property type="term" value="C:presynaptic membrane"/>
    <property type="evidence" value="ECO:0007669"/>
    <property type="project" value="Ensembl"/>
</dbReference>
<dbReference type="GO" id="GO:0051393">
    <property type="term" value="F:alpha-actinin binding"/>
    <property type="evidence" value="ECO:0007669"/>
    <property type="project" value="Ensembl"/>
</dbReference>
<dbReference type="GO" id="GO:0005516">
    <property type="term" value="F:calmodulin binding"/>
    <property type="evidence" value="ECO:0007669"/>
    <property type="project" value="Ensembl"/>
</dbReference>
<dbReference type="GO" id="GO:0019899">
    <property type="term" value="F:enzyme binding"/>
    <property type="evidence" value="ECO:0007669"/>
    <property type="project" value="Ensembl"/>
</dbReference>
<dbReference type="GO" id="GO:0001609">
    <property type="term" value="F:G protein-coupled adenosine receptor activity"/>
    <property type="evidence" value="ECO:0000314"/>
    <property type="project" value="MGI"/>
</dbReference>
<dbReference type="GO" id="GO:0042802">
    <property type="term" value="F:identical protein binding"/>
    <property type="evidence" value="ECO:0007669"/>
    <property type="project" value="Ensembl"/>
</dbReference>
<dbReference type="GO" id="GO:0008289">
    <property type="term" value="F:lipid binding"/>
    <property type="evidence" value="ECO:0007669"/>
    <property type="project" value="Ensembl"/>
</dbReference>
<dbReference type="GO" id="GO:0044877">
    <property type="term" value="F:protein-containing complex binding"/>
    <property type="evidence" value="ECO:0007669"/>
    <property type="project" value="Ensembl"/>
</dbReference>
<dbReference type="GO" id="GO:0031802">
    <property type="term" value="F:type 5 metabotropic glutamate receptor binding"/>
    <property type="evidence" value="ECO:0007669"/>
    <property type="project" value="Ensembl"/>
</dbReference>
<dbReference type="GO" id="GO:0007189">
    <property type="term" value="P:adenylate cyclase-activating G protein-coupled receptor signaling pathway"/>
    <property type="evidence" value="ECO:0000314"/>
    <property type="project" value="MGI"/>
</dbReference>
<dbReference type="GO" id="GO:0097190">
    <property type="term" value="P:apoptotic signaling pathway"/>
    <property type="evidence" value="ECO:0000315"/>
    <property type="project" value="MGI"/>
</dbReference>
<dbReference type="GO" id="GO:0048143">
    <property type="term" value="P:astrocyte activation"/>
    <property type="evidence" value="ECO:0007669"/>
    <property type="project" value="Ensembl"/>
</dbReference>
<dbReference type="GO" id="GO:0042755">
    <property type="term" value="P:eating behavior"/>
    <property type="evidence" value="ECO:0000316"/>
    <property type="project" value="MGI"/>
</dbReference>
<dbReference type="GO" id="GO:0060079">
    <property type="term" value="P:excitatory postsynaptic potential"/>
    <property type="evidence" value="ECO:0007669"/>
    <property type="project" value="Ensembl"/>
</dbReference>
<dbReference type="GO" id="GO:0001973">
    <property type="term" value="P:G protein-coupled adenosine receptor signaling pathway"/>
    <property type="evidence" value="ECO:0000314"/>
    <property type="project" value="MGI"/>
</dbReference>
<dbReference type="GO" id="GO:0007186">
    <property type="term" value="P:G protein-coupled receptor signaling pathway"/>
    <property type="evidence" value="ECO:0000315"/>
    <property type="project" value="MGI"/>
</dbReference>
<dbReference type="GO" id="GO:0140928">
    <property type="term" value="P:inhibition of non-skeletal tissue mineralization"/>
    <property type="evidence" value="ECO:0000266"/>
    <property type="project" value="MGI"/>
</dbReference>
<dbReference type="GO" id="GO:0060080">
    <property type="term" value="P:inhibitory postsynaptic potential"/>
    <property type="evidence" value="ECO:0000316"/>
    <property type="project" value="MGI"/>
</dbReference>
<dbReference type="GO" id="GO:0007626">
    <property type="term" value="P:locomotory behavior"/>
    <property type="evidence" value="ECO:0000316"/>
    <property type="project" value="MGI"/>
</dbReference>
<dbReference type="GO" id="GO:0051899">
    <property type="term" value="P:membrane depolarization"/>
    <property type="evidence" value="ECO:0007669"/>
    <property type="project" value="Ensembl"/>
</dbReference>
<dbReference type="GO" id="GO:0046636">
    <property type="term" value="P:negative regulation of alpha-beta T cell activation"/>
    <property type="evidence" value="ECO:0000314"/>
    <property type="project" value="MGI"/>
</dbReference>
<dbReference type="GO" id="GO:0008285">
    <property type="term" value="P:negative regulation of cell population proliferation"/>
    <property type="evidence" value="ECO:0007669"/>
    <property type="project" value="Ensembl"/>
</dbReference>
<dbReference type="GO" id="GO:0050728">
    <property type="term" value="P:negative regulation of inflammatory response"/>
    <property type="evidence" value="ECO:0000316"/>
    <property type="project" value="MGI"/>
</dbReference>
<dbReference type="GO" id="GO:0043524">
    <property type="term" value="P:negative regulation of neuron apoptotic process"/>
    <property type="evidence" value="ECO:0007669"/>
    <property type="project" value="Ensembl"/>
</dbReference>
<dbReference type="GO" id="GO:0043116">
    <property type="term" value="P:negative regulation of vascular permeability"/>
    <property type="evidence" value="ECO:0007669"/>
    <property type="project" value="Ensembl"/>
</dbReference>
<dbReference type="GO" id="GO:0048812">
    <property type="term" value="P:neuron projection morphogenesis"/>
    <property type="evidence" value="ECO:0007669"/>
    <property type="project" value="Ensembl"/>
</dbReference>
<dbReference type="GO" id="GO:0007200">
    <property type="term" value="P:phospholipase C-activating G protein-coupled receptor signaling pathway"/>
    <property type="evidence" value="ECO:0007669"/>
    <property type="project" value="Ensembl"/>
</dbReference>
<dbReference type="GO" id="GO:0014057">
    <property type="term" value="P:positive regulation of acetylcholine secretion, neurotransmission"/>
    <property type="evidence" value="ECO:0007669"/>
    <property type="project" value="Ensembl"/>
</dbReference>
<dbReference type="GO" id="GO:2001235">
    <property type="term" value="P:positive regulation of apoptotic signaling pathway"/>
    <property type="evidence" value="ECO:0000315"/>
    <property type="project" value="MGI"/>
</dbReference>
<dbReference type="GO" id="GO:0045938">
    <property type="term" value="P:positive regulation of circadian sleep/wake cycle, sleep"/>
    <property type="evidence" value="ECO:0007669"/>
    <property type="project" value="Ensembl"/>
</dbReference>
<dbReference type="GO" id="GO:0070374">
    <property type="term" value="P:positive regulation of ERK1 and ERK2 cascade"/>
    <property type="evidence" value="ECO:0007669"/>
    <property type="project" value="Ensembl"/>
</dbReference>
<dbReference type="GO" id="GO:0014049">
    <property type="term" value="P:positive regulation of glutamate secretion"/>
    <property type="evidence" value="ECO:0007669"/>
    <property type="project" value="Ensembl"/>
</dbReference>
<dbReference type="GO" id="GO:1900273">
    <property type="term" value="P:positive regulation of long-term synaptic potentiation"/>
    <property type="evidence" value="ECO:0007669"/>
    <property type="project" value="Ensembl"/>
</dbReference>
<dbReference type="GO" id="GO:0050714">
    <property type="term" value="P:positive regulation of protein secretion"/>
    <property type="evidence" value="ECO:0007669"/>
    <property type="project" value="Ensembl"/>
</dbReference>
<dbReference type="GO" id="GO:0032230">
    <property type="term" value="P:positive regulation of synaptic transmission, GABAergic"/>
    <property type="evidence" value="ECO:0000314"/>
    <property type="project" value="MGI"/>
</dbReference>
<dbReference type="GO" id="GO:0051968">
    <property type="term" value="P:positive regulation of synaptic transmission, glutamatergic"/>
    <property type="evidence" value="ECO:0007669"/>
    <property type="project" value="Ensembl"/>
</dbReference>
<dbReference type="GO" id="GO:0035810">
    <property type="term" value="P:positive regulation of urine volume"/>
    <property type="evidence" value="ECO:0007669"/>
    <property type="project" value="Ensembl"/>
</dbReference>
<dbReference type="GO" id="GO:0060134">
    <property type="term" value="P:prepulse inhibition"/>
    <property type="evidence" value="ECO:0007669"/>
    <property type="project" value="Ensembl"/>
</dbReference>
<dbReference type="GO" id="GO:0099171">
    <property type="term" value="P:presynaptic modulation of chemical synaptic transmission"/>
    <property type="evidence" value="ECO:0007669"/>
    <property type="project" value="Ensembl"/>
</dbReference>
<dbReference type="GO" id="GO:0051924">
    <property type="term" value="P:regulation of calcium ion transport"/>
    <property type="evidence" value="ECO:0007669"/>
    <property type="project" value="Ensembl"/>
</dbReference>
<dbReference type="GO" id="GO:0006355">
    <property type="term" value="P:regulation of DNA-templated transcription"/>
    <property type="evidence" value="ECO:0007669"/>
    <property type="project" value="Ensembl"/>
</dbReference>
<dbReference type="GO" id="GO:0051881">
    <property type="term" value="P:regulation of mitochondrial membrane potential"/>
    <property type="evidence" value="ECO:0007669"/>
    <property type="project" value="Ensembl"/>
</dbReference>
<dbReference type="GO" id="GO:0014061">
    <property type="term" value="P:regulation of norepinephrine secretion"/>
    <property type="evidence" value="ECO:0007669"/>
    <property type="project" value="Ensembl"/>
</dbReference>
<dbReference type="GO" id="GO:0001975">
    <property type="term" value="P:response to amphetamine"/>
    <property type="evidence" value="ECO:0000315"/>
    <property type="project" value="MGI"/>
</dbReference>
<dbReference type="GO" id="GO:0031000">
    <property type="term" value="P:response to caffeine"/>
    <property type="evidence" value="ECO:0007669"/>
    <property type="project" value="Ensembl"/>
</dbReference>
<dbReference type="GO" id="GO:0009410">
    <property type="term" value="P:response to xenobiotic stimulus"/>
    <property type="evidence" value="ECO:0007669"/>
    <property type="project" value="Ensembl"/>
</dbReference>
<dbReference type="GO" id="GO:0007271">
    <property type="term" value="P:synaptic transmission, cholinergic"/>
    <property type="evidence" value="ECO:0007669"/>
    <property type="project" value="Ensembl"/>
</dbReference>
<dbReference type="GO" id="GO:0001963">
    <property type="term" value="P:synaptic transmission, dopaminergic"/>
    <property type="evidence" value="ECO:0000316"/>
    <property type="project" value="MGI"/>
</dbReference>
<dbReference type="GO" id="GO:0035249">
    <property type="term" value="P:synaptic transmission, glutamatergic"/>
    <property type="evidence" value="ECO:0007669"/>
    <property type="project" value="Ensembl"/>
</dbReference>
<dbReference type="GO" id="GO:0042311">
    <property type="term" value="P:vasodilation"/>
    <property type="evidence" value="ECO:0007669"/>
    <property type="project" value="Ensembl"/>
</dbReference>
<dbReference type="CDD" id="cd15068">
    <property type="entry name" value="7tmA_Adenosine_R_A2A"/>
    <property type="match status" value="1"/>
</dbReference>
<dbReference type="FunFam" id="1.20.1070.10:FF:000061">
    <property type="entry name" value="Adenosine receptor A2"/>
    <property type="match status" value="1"/>
</dbReference>
<dbReference type="Gene3D" id="1.20.1070.10">
    <property type="entry name" value="Rhodopsin 7-helix transmembrane proteins"/>
    <property type="match status" value="1"/>
</dbReference>
<dbReference type="InterPro" id="IPR001513">
    <property type="entry name" value="Adeno_A2A_rcpt"/>
</dbReference>
<dbReference type="InterPro" id="IPR001634">
    <property type="entry name" value="Adenosn_rcpt"/>
</dbReference>
<dbReference type="InterPro" id="IPR000276">
    <property type="entry name" value="GPCR_Rhodpsn"/>
</dbReference>
<dbReference type="InterPro" id="IPR017452">
    <property type="entry name" value="GPCR_Rhodpsn_7TM"/>
</dbReference>
<dbReference type="PANTHER" id="PTHR24246:SF47">
    <property type="entry name" value="ADENOSINE RECEPTOR A2A"/>
    <property type="match status" value="1"/>
</dbReference>
<dbReference type="PANTHER" id="PTHR24246">
    <property type="entry name" value="OLFACTORY RECEPTOR AND ADENOSINE RECEPTOR"/>
    <property type="match status" value="1"/>
</dbReference>
<dbReference type="Pfam" id="PF00001">
    <property type="entry name" value="7tm_1"/>
    <property type="match status" value="1"/>
</dbReference>
<dbReference type="PRINTS" id="PR00553">
    <property type="entry name" value="ADENOSINA2AR"/>
</dbReference>
<dbReference type="PRINTS" id="PR00424">
    <property type="entry name" value="ADENOSINER"/>
</dbReference>
<dbReference type="PRINTS" id="PR00237">
    <property type="entry name" value="GPCRRHODOPSN"/>
</dbReference>
<dbReference type="SMART" id="SM01381">
    <property type="entry name" value="7TM_GPCR_Srsx"/>
    <property type="match status" value="1"/>
</dbReference>
<dbReference type="SUPFAM" id="SSF81321">
    <property type="entry name" value="Family A G protein-coupled receptor-like"/>
    <property type="match status" value="1"/>
</dbReference>
<dbReference type="PROSITE" id="PS00237">
    <property type="entry name" value="G_PROTEIN_RECEP_F1_1"/>
    <property type="match status" value="1"/>
</dbReference>
<dbReference type="PROSITE" id="PS50262">
    <property type="entry name" value="G_PROTEIN_RECEP_F1_2"/>
    <property type="match status" value="1"/>
</dbReference>
<protein>
    <recommendedName>
        <fullName>Adenosine receptor A2a</fullName>
    </recommendedName>
</protein>
<accession>Q60613</accession>
<accession>Q2NLC1</accession>
<proteinExistence type="evidence at protein level"/>
<feature type="chain" id="PRO_0000069000" description="Adenosine receptor A2a">
    <location>
        <begin position="1"/>
        <end position="410"/>
    </location>
</feature>
<feature type="topological domain" description="Extracellular" evidence="1">
    <location>
        <begin position="1"/>
        <end position="4"/>
    </location>
</feature>
<feature type="transmembrane region" description="Helical; Name=1" evidence="1">
    <location>
        <begin position="5"/>
        <end position="29"/>
    </location>
</feature>
<feature type="topological domain" description="Cytoplasmic" evidence="1">
    <location>
        <begin position="30"/>
        <end position="39"/>
    </location>
</feature>
<feature type="transmembrane region" description="Helical; Name=2" evidence="1">
    <location>
        <begin position="40"/>
        <end position="63"/>
    </location>
</feature>
<feature type="topological domain" description="Extracellular" evidence="1">
    <location>
        <begin position="64"/>
        <end position="74"/>
    </location>
</feature>
<feature type="transmembrane region" description="Helical; Name=3" evidence="1">
    <location>
        <begin position="75"/>
        <end position="97"/>
    </location>
</feature>
<feature type="topological domain" description="Cytoplasmic" evidence="1">
    <location>
        <begin position="98"/>
        <end position="117"/>
    </location>
</feature>
<feature type="transmembrane region" description="Helical; Name=4" evidence="1">
    <location>
        <begin position="118"/>
        <end position="140"/>
    </location>
</feature>
<feature type="topological domain" description="Extracellular" evidence="1">
    <location>
        <begin position="141"/>
        <end position="168"/>
    </location>
</feature>
<feature type="transmembrane region" description="Helical; Name=5" evidence="1">
    <location>
        <begin position="169"/>
        <end position="193"/>
    </location>
</feature>
<feature type="topological domain" description="Cytoplasmic" evidence="1">
    <location>
        <begin position="194"/>
        <end position="229"/>
    </location>
</feature>
<feature type="transmembrane region" description="Helical; Name=6" evidence="1">
    <location>
        <begin position="230"/>
        <end position="253"/>
    </location>
</feature>
<feature type="topological domain" description="Extracellular" evidence="1">
    <location>
        <begin position="254"/>
        <end position="261"/>
    </location>
</feature>
<feature type="transmembrane region" description="Helical; Name=7" evidence="1">
    <location>
        <begin position="262"/>
        <end position="285"/>
    </location>
</feature>
<feature type="topological domain" description="Cytoplasmic" evidence="1">
    <location>
        <begin position="286"/>
        <end position="410"/>
    </location>
</feature>
<feature type="region of interest" description="Interaction with GAS2L2" evidence="4">
    <location>
        <begin position="322"/>
        <end position="410"/>
    </location>
</feature>
<feature type="region of interest" description="Disordered" evidence="7">
    <location>
        <begin position="342"/>
        <end position="410"/>
    </location>
</feature>
<feature type="compositionally biased region" description="Basic and acidic residues" evidence="7">
    <location>
        <begin position="377"/>
        <end position="389"/>
    </location>
</feature>
<feature type="compositionally biased region" description="Polar residues" evidence="7">
    <location>
        <begin position="401"/>
        <end position="410"/>
    </location>
</feature>
<feature type="binding site" evidence="3">
    <location>
        <position position="164"/>
    </location>
    <ligand>
        <name>adenosine</name>
        <dbReference type="ChEBI" id="CHEBI:16335"/>
        <note>agonist</note>
    </ligand>
</feature>
<feature type="binding site" evidence="3">
    <location>
        <position position="248"/>
    </location>
    <ligand>
        <name>adenosine</name>
        <dbReference type="ChEBI" id="CHEBI:16335"/>
        <note>agonist</note>
    </ligand>
</feature>
<feature type="binding site" evidence="3">
    <location>
        <position position="272"/>
    </location>
    <ligand>
        <name>adenosine</name>
        <dbReference type="ChEBI" id="CHEBI:16335"/>
        <note>agonist</note>
    </ligand>
</feature>
<feature type="binding site" evidence="3">
    <location>
        <position position="273"/>
    </location>
    <ligand>
        <name>adenosine</name>
        <dbReference type="ChEBI" id="CHEBI:16335"/>
        <note>agonist</note>
    </ligand>
</feature>
<feature type="glycosylation site" description="N-linked (GlcNAc...) asparagine" evidence="5">
    <location>
        <position position="142"/>
    </location>
</feature>
<feature type="glycosylation site" description="N-linked (GlcNAc...) asparagine" evidence="5">
    <location>
        <position position="149"/>
    </location>
</feature>
<feature type="disulfide bond" evidence="6">
    <location>
        <begin position="68"/>
        <end position="154"/>
    </location>
</feature>
<feature type="disulfide bond" evidence="6">
    <location>
        <begin position="71"/>
        <end position="143"/>
    </location>
</feature>
<feature type="disulfide bond" evidence="6">
    <location>
        <begin position="74"/>
        <end position="161"/>
    </location>
</feature>
<feature type="disulfide bond" evidence="6">
    <location>
        <begin position="254"/>
        <end position="257"/>
    </location>
</feature>
<feature type="sequence conflict" description="In Ref. 1; CAA73787/CAA73788." evidence="9" ref="1">
    <original>F</original>
    <variation>I</variation>
    <location>
        <position position="77"/>
    </location>
</feature>
<feature type="sequence conflict" description="In Ref. 1; CAA73787/CAA73788." evidence="9" ref="1">
    <original>R</original>
    <variation>K</variation>
    <location>
        <position position="117"/>
    </location>
</feature>
<feature type="sequence conflict" description="In Ref. 4; AAA19000." evidence="9" ref="4">
    <original>ML</original>
    <variation>TA</variation>
    <location>
        <begin position="137"/>
        <end position="138"/>
    </location>
</feature>
<feature type="sequence conflict" description="In Ref. 1; CAA73787/CAA73788." evidence="9" ref="1">
    <original>K</original>
    <variation>T</variation>
    <location>
        <position position="146"/>
    </location>
</feature>
<feature type="sequence conflict" description="In Ref. 4; AAA19000." evidence="9" ref="4">
    <original>K</original>
    <variation>P</variation>
    <location>
        <position position="204"/>
    </location>
</feature>
<comment type="function">
    <text evidence="2">Receptor for adenosine (By similarity). The activity of this receptor is mediated by G proteins which activate adenylyl cyclase (By similarity).</text>
</comment>
<comment type="subunit">
    <text evidence="3 8">Interacts (via cytoplasmic C-terminal domain) with USP4; the interaction is direct (By similarity). May interact with DRD4 (By similarity). Interacts with NECAB2 (By similarity). Interacts (via cytoplasmic C-terminal domain) with GAS2L2; interaction enhances receptor-mediated adenylyl cyclase activity (PubMed:23994616).</text>
</comment>
<comment type="subcellular location">
    <subcellularLocation>
        <location evidence="4">Cell membrane</location>
        <topology evidence="4">Multi-pass membrane protein</topology>
    </subcellularLocation>
    <text evidence="4">Colocalizes with GAS2L2 at neuronal processes.</text>
</comment>
<comment type="domain">
    <text evidence="1">The cytoplasmic C-terminal domain is necessary for targeting the non-ubiquitinated form of this protein to the cell surface.</text>
</comment>
<comment type="PTM">
    <text evidence="1">Ubiquitinated. Deubiquitinated by USP4; leading to stabilization and expression at the cell surface (By similarity).</text>
</comment>
<comment type="similarity">
    <text evidence="6">Belongs to the G-protein coupled receptor 1 family.</text>
</comment>